<sequence length="349" mass="39499">MAGSLTASNRRRNAEDSSEIYRWTIGFARFVHYPSSPSPHPVLKPLGKREQYHSPHGTWLSASSSTVSLHIVDELNRSDVILSVKLGQKVLEEHYISKLNFTWPQMSCVSGFPSRGSRAIFVTYMDSANQIQKFALRFSTCDAALEFVEALKEKIKGLKEASTQNQKNKTRCDVSFQSDYNPSDAIIPRATQKEPNMVRPLNSYVPEMLPRIVYEAQYQKSETRSEVSFQSDYNPSIEIFPRATEEEPNMVRFFDSSVPEVLPRPEYEAGQALYPSQSTLNQIPSLPPSFTTLLSGCFPDSTLDAGQTTVKQNPDLKSQILKYMEDSSFQDMLQKVERIIDEIGGNWIT</sequence>
<reference key="1">
    <citation type="journal article" date="2000" name="Nature">
        <title>Sequence and analysis of chromosome 1 of the plant Arabidopsis thaliana.</title>
        <authorList>
            <person name="Theologis A."/>
            <person name="Ecker J.R."/>
            <person name="Palm C.J."/>
            <person name="Federspiel N.A."/>
            <person name="Kaul S."/>
            <person name="White O."/>
            <person name="Alonso J."/>
            <person name="Altafi H."/>
            <person name="Araujo R."/>
            <person name="Bowman C.L."/>
            <person name="Brooks S.Y."/>
            <person name="Buehler E."/>
            <person name="Chan A."/>
            <person name="Chao Q."/>
            <person name="Chen H."/>
            <person name="Cheuk R.F."/>
            <person name="Chin C.W."/>
            <person name="Chung M.K."/>
            <person name="Conn L."/>
            <person name="Conway A.B."/>
            <person name="Conway A.R."/>
            <person name="Creasy T.H."/>
            <person name="Dewar K."/>
            <person name="Dunn P."/>
            <person name="Etgu P."/>
            <person name="Feldblyum T.V."/>
            <person name="Feng J.-D."/>
            <person name="Fong B."/>
            <person name="Fujii C.Y."/>
            <person name="Gill J.E."/>
            <person name="Goldsmith A.D."/>
            <person name="Haas B."/>
            <person name="Hansen N.F."/>
            <person name="Hughes B."/>
            <person name="Huizar L."/>
            <person name="Hunter J.L."/>
            <person name="Jenkins J."/>
            <person name="Johnson-Hopson C."/>
            <person name="Khan S."/>
            <person name="Khaykin E."/>
            <person name="Kim C.J."/>
            <person name="Koo H.L."/>
            <person name="Kremenetskaia I."/>
            <person name="Kurtz D.B."/>
            <person name="Kwan A."/>
            <person name="Lam B."/>
            <person name="Langin-Hooper S."/>
            <person name="Lee A."/>
            <person name="Lee J.M."/>
            <person name="Lenz C.A."/>
            <person name="Li J.H."/>
            <person name="Li Y.-P."/>
            <person name="Lin X."/>
            <person name="Liu S.X."/>
            <person name="Liu Z.A."/>
            <person name="Luros J.S."/>
            <person name="Maiti R."/>
            <person name="Marziali A."/>
            <person name="Militscher J."/>
            <person name="Miranda M."/>
            <person name="Nguyen M."/>
            <person name="Nierman W.C."/>
            <person name="Osborne B.I."/>
            <person name="Pai G."/>
            <person name="Peterson J."/>
            <person name="Pham P.K."/>
            <person name="Rizzo M."/>
            <person name="Rooney T."/>
            <person name="Rowley D."/>
            <person name="Sakano H."/>
            <person name="Salzberg S.L."/>
            <person name="Schwartz J.R."/>
            <person name="Shinn P."/>
            <person name="Southwick A.M."/>
            <person name="Sun H."/>
            <person name="Tallon L.J."/>
            <person name="Tambunga G."/>
            <person name="Toriumi M.J."/>
            <person name="Town C.D."/>
            <person name="Utterback T."/>
            <person name="Van Aken S."/>
            <person name="Vaysberg M."/>
            <person name="Vysotskaia V.S."/>
            <person name="Walker M."/>
            <person name="Wu D."/>
            <person name="Yu G."/>
            <person name="Fraser C.M."/>
            <person name="Venter J.C."/>
            <person name="Davis R.W."/>
        </authorList>
    </citation>
    <scope>NUCLEOTIDE SEQUENCE [LARGE SCALE GENOMIC DNA]</scope>
    <source>
        <strain>cv. Columbia</strain>
    </source>
</reference>
<reference key="2">
    <citation type="journal article" date="2017" name="Plant J.">
        <title>Araport11: a complete reannotation of the Arabidopsis thaliana reference genome.</title>
        <authorList>
            <person name="Cheng C.Y."/>
            <person name="Krishnakumar V."/>
            <person name="Chan A.P."/>
            <person name="Thibaud-Nissen F."/>
            <person name="Schobel S."/>
            <person name="Town C.D."/>
        </authorList>
    </citation>
    <scope>GENOME REANNOTATION</scope>
    <source>
        <strain>cv. Columbia</strain>
    </source>
</reference>
<reference key="3">
    <citation type="submission" date="2005-07" db="EMBL/GenBank/DDBJ databases">
        <title>Reconstruction of cDNA sequences for hypothetical genes in Arabidopsis thaliana from 5' and 3' RACE products.</title>
        <authorList>
            <person name="Xiao Y.-L."/>
            <person name="Underwood B.A."/>
            <person name="Moskal W."/>
            <person name="Redman J."/>
            <person name="Wang W."/>
            <person name="Monaghan E."/>
            <person name="Wu H.C."/>
            <person name="Utterback T."/>
            <person name="Town C.D."/>
        </authorList>
    </citation>
    <scope>NUCLEOTIDE SEQUENCE [LARGE SCALE MRNA] (ISOFORMS 1 AND 2)</scope>
    <source>
        <strain>cv. Columbia</strain>
    </source>
</reference>
<reference key="4">
    <citation type="submission" date="2005-02" db="EMBL/GenBank/DDBJ databases">
        <authorList>
            <person name="Underwood B.A."/>
            <person name="Xiao Y.-L."/>
            <person name="Moskal W.A. Jr."/>
            <person name="Monaghan E.L."/>
            <person name="Wang W."/>
            <person name="Redman J.C."/>
            <person name="Wu H.C."/>
            <person name="Utterback T."/>
            <person name="Town C.D."/>
        </authorList>
    </citation>
    <scope>NUCLEOTIDE SEQUENCE [LARGE SCALE MRNA] (ISOFORM 2)</scope>
    <source>
        <strain>cv. Columbia</strain>
    </source>
</reference>
<reference key="5">
    <citation type="journal article" date="2009" name="Proc. Natl. Acad. Sci. U.S.A.">
        <title>PHS1 regulates meiotic recombination and homologous chromosome pairing by controlling the transport of RAD50 to the nucleus.</title>
        <authorList>
            <person name="Ronceret A."/>
            <person name="Doutriaux M.P."/>
            <person name="Golubovskaya I.N."/>
            <person name="Pawlowski W.P."/>
        </authorList>
    </citation>
    <scope>FUNCTION</scope>
    <scope>SUBCELLULAR LOCATION</scope>
    <scope>MUTAGENESIS OF CYS-172; ARG-199; SER-203; THR-223 AND PRO-235</scope>
    <scope>DISRUPTION PHENOTYPE</scope>
</reference>
<dbReference type="EMBL" id="AC007354">
    <property type="protein sequence ID" value="AAD31342.1"/>
    <property type="status" value="ALT_SEQ"/>
    <property type="molecule type" value="Genomic_DNA"/>
</dbReference>
<dbReference type="EMBL" id="CP002684">
    <property type="protein sequence ID" value="AEE28631.2"/>
    <property type="molecule type" value="Genomic_DNA"/>
</dbReference>
<dbReference type="EMBL" id="CP002684">
    <property type="protein sequence ID" value="AEE28632.2"/>
    <property type="molecule type" value="Genomic_DNA"/>
</dbReference>
<dbReference type="EMBL" id="DQ132644">
    <property type="protein sequence ID" value="AAZ52674.1"/>
    <property type="molecule type" value="mRNA"/>
</dbReference>
<dbReference type="EMBL" id="DQ132645">
    <property type="protein sequence ID" value="AAZ52675.1"/>
    <property type="molecule type" value="mRNA"/>
</dbReference>
<dbReference type="EMBL" id="AY924661">
    <property type="protein sequence ID" value="AAX23736.1"/>
    <property type="molecule type" value="mRNA"/>
</dbReference>
<dbReference type="PIR" id="E86240">
    <property type="entry name" value="E86240"/>
</dbReference>
<dbReference type="RefSeq" id="NP_001077508.1">
    <molecule id="Q45GQ7-1"/>
    <property type="nucleotide sequence ID" value="NM_001084039.1"/>
</dbReference>
<dbReference type="RefSeq" id="NP_001318974.1">
    <molecule id="Q45GQ7-3"/>
    <property type="nucleotide sequence ID" value="NM_001331923.1"/>
</dbReference>
<dbReference type="FunCoup" id="Q45GQ7">
    <property type="interactions" value="6"/>
</dbReference>
<dbReference type="STRING" id="3702.Q45GQ7"/>
<dbReference type="PaxDb" id="3702-AT1G10710.1"/>
<dbReference type="EnsemblPlants" id="AT1G10710.1">
    <molecule id="Q45GQ7-1"/>
    <property type="protein sequence ID" value="AT1G10710.1"/>
    <property type="gene ID" value="AT1G10710"/>
</dbReference>
<dbReference type="EnsemblPlants" id="AT1G10710.2">
    <molecule id="Q45GQ7-3"/>
    <property type="protein sequence ID" value="AT1G10710.2"/>
    <property type="gene ID" value="AT1G10710"/>
</dbReference>
<dbReference type="GeneID" id="837614"/>
<dbReference type="Gramene" id="AT1G10710.1">
    <molecule id="Q45GQ7-1"/>
    <property type="protein sequence ID" value="AT1G10710.1"/>
    <property type="gene ID" value="AT1G10710"/>
</dbReference>
<dbReference type="Gramene" id="AT1G10710.2">
    <molecule id="Q45GQ7-3"/>
    <property type="protein sequence ID" value="AT1G10710.2"/>
    <property type="gene ID" value="AT1G10710"/>
</dbReference>
<dbReference type="KEGG" id="ath:AT1G10710"/>
<dbReference type="Araport" id="AT1G10710"/>
<dbReference type="TAIR" id="AT1G10710">
    <property type="gene designation" value="PHS1"/>
</dbReference>
<dbReference type="eggNOG" id="ENOG502RYMD">
    <property type="taxonomic scope" value="Eukaryota"/>
</dbReference>
<dbReference type="HOGENOM" id="CLU_055908_0_0_1"/>
<dbReference type="InParanoid" id="Q45GQ7"/>
<dbReference type="OMA" id="YEPQIAT"/>
<dbReference type="OrthoDB" id="1864854at2759"/>
<dbReference type="PRO" id="PR:Q45GQ7"/>
<dbReference type="Proteomes" id="UP000006548">
    <property type="component" value="Chromosome 1"/>
</dbReference>
<dbReference type="ExpressionAtlas" id="Q45GQ7">
    <property type="expression patterns" value="baseline and differential"/>
</dbReference>
<dbReference type="GO" id="GO:0005737">
    <property type="term" value="C:cytoplasm"/>
    <property type="evidence" value="ECO:0000314"/>
    <property type="project" value="UniProtKB"/>
</dbReference>
<dbReference type="GO" id="GO:0007129">
    <property type="term" value="P:homologous chromosome pairing at meiosis"/>
    <property type="evidence" value="ECO:0000315"/>
    <property type="project" value="UniProtKB"/>
</dbReference>
<dbReference type="Pfam" id="PF25349">
    <property type="entry name" value="PH_PHS1"/>
    <property type="match status" value="1"/>
</dbReference>
<feature type="chain" id="PRO_0000435706" description="Protein POOR HOMOLOGOUS SYNAPSIS 1">
    <location>
        <begin position="1"/>
        <end position="349"/>
    </location>
</feature>
<feature type="splice variant" id="VSP_058920" description="In isoform 3.">
    <location>
        <begin position="174"/>
        <end position="226"/>
    </location>
</feature>
<feature type="splice variant" id="VSP_058884" description="In isoform 2.">
    <original>GNWIT</original>
    <variation>DRCVGSTIGRSSKIYIPLCFHNNCIHPFKDDCWCCLAAGTKKDWCWLEKDFPDAKELCMKTCTRKI</variation>
    <location>
        <begin position="345"/>
        <end position="349"/>
    </location>
</feature>
<feature type="mutagenesis site" description="No effect on meiosis." evidence="1">
    <original>C</original>
    <variation>Y</variation>
    <location>
        <position position="172"/>
    </location>
</feature>
<feature type="mutagenesis site" description="No effect on meiosis." evidence="1">
    <original>R</original>
    <variation>K</variation>
    <location>
        <position position="199"/>
    </location>
</feature>
<feature type="mutagenesis site" description="No effect on meiosis." evidence="1">
    <original>S</original>
    <variation>N</variation>
    <location>
        <position position="203"/>
    </location>
</feature>
<feature type="mutagenesis site" description="No effect on meiosis." evidence="1">
    <original>T</original>
    <variation>I</variation>
    <location>
        <position position="223"/>
    </location>
</feature>
<feature type="mutagenesis site" description="No effect on meiosis." evidence="1">
    <original>P</original>
    <variation>L</variation>
    <location>
        <position position="235"/>
    </location>
</feature>
<name>POHS1_ARATH</name>
<proteinExistence type="evidence at protein level"/>
<accession>Q45GQ7</accession>
<accession>F4I5W5</accession>
<accession>Q5BQ17</accession>
<accession>Q9SAD1</accession>
<protein>
    <recommendedName>
        <fullName evidence="2">Protein POOR HOMOLOGOUS SYNAPSIS 1</fullName>
    </recommendedName>
</protein>
<evidence type="ECO:0000269" key="1">
    <source>
    </source>
</evidence>
<evidence type="ECO:0000303" key="2">
    <source>
    </source>
</evidence>
<evidence type="ECO:0000305" key="3"/>
<evidence type="ECO:0000312" key="4">
    <source>
        <dbReference type="Araport" id="AT1G10710"/>
    </source>
</evidence>
<evidence type="ECO:0000312" key="5">
    <source>
        <dbReference type="EMBL" id="AAD31342.1"/>
    </source>
</evidence>
<comment type="function">
    <text evidence="1">Required for accurate chromosome segregation in meiosis. Required for pairing to occur between homologous chromosomes. Acts in early recombination steps and ensures pairing fidelity and proper repair of meiotic DNA double-strand-breaks. Regulates recombination and pairing of homologous chromosomes during meiotic prophase by controlling transport of RAD50 from cytoplasm to the nucleus. May affect pairing of the gene-rich fraction of the genome rather than preventing pairing between repetitive DNA elements.</text>
</comment>
<comment type="subcellular location">
    <subcellularLocation>
        <location evidence="1">Cytoplasm</location>
    </subcellularLocation>
    <text evidence="1">Localizes to the cytoplasm during leptotene, zygotene and pachytene.</text>
</comment>
<comment type="alternative products">
    <event type="alternative splicing"/>
    <isoform>
        <id>Q45GQ7-1</id>
        <name>1</name>
        <sequence type="displayed"/>
    </isoform>
    <isoform>
        <id>Q45GQ7-2</id>
        <name>2</name>
        <sequence type="described" ref="VSP_058884"/>
    </isoform>
    <isoform>
        <id>Q45GQ7-3</id>
        <name>3</name>
        <sequence type="described" ref="VSP_058920"/>
    </isoform>
    <text evidence="3">A number of isoforms are produced. According to EST sequences.</text>
</comment>
<comment type="disruption phenotype">
    <text evidence="1">Sterility. Chromosome paring defects during meiosis.</text>
</comment>
<comment type="sequence caution" evidence="3">
    <conflict type="erroneous gene model prediction">
        <sequence resource="EMBL-CDS" id="AAD31342"/>
    </conflict>
</comment>
<keyword id="KW-0025">Alternative splicing</keyword>
<keyword id="KW-0963">Cytoplasm</keyword>
<keyword id="KW-0469">Meiosis</keyword>
<keyword id="KW-1185">Reference proteome</keyword>
<organism>
    <name type="scientific">Arabidopsis thaliana</name>
    <name type="common">Mouse-ear cress</name>
    <dbReference type="NCBI Taxonomy" id="3702"/>
    <lineage>
        <taxon>Eukaryota</taxon>
        <taxon>Viridiplantae</taxon>
        <taxon>Streptophyta</taxon>
        <taxon>Embryophyta</taxon>
        <taxon>Tracheophyta</taxon>
        <taxon>Spermatophyta</taxon>
        <taxon>Magnoliopsida</taxon>
        <taxon>eudicotyledons</taxon>
        <taxon>Gunneridae</taxon>
        <taxon>Pentapetalae</taxon>
        <taxon>rosids</taxon>
        <taxon>malvids</taxon>
        <taxon>Brassicales</taxon>
        <taxon>Brassicaceae</taxon>
        <taxon>Camelineae</taxon>
        <taxon>Arabidopsis</taxon>
    </lineage>
</organism>
<gene>
    <name evidence="2" type="primary">PHS1</name>
    <name evidence="4" type="ordered locus">At1g10710</name>
    <name evidence="5" type="ORF">T16B5.15</name>
</gene>